<accession>Q1QZZ4</accession>
<comment type="catalytic activity">
    <reaction evidence="1">
        <text>tRNA(Arg) + L-arginine + ATP = L-arginyl-tRNA(Arg) + AMP + diphosphate</text>
        <dbReference type="Rhea" id="RHEA:20301"/>
        <dbReference type="Rhea" id="RHEA-COMP:9658"/>
        <dbReference type="Rhea" id="RHEA-COMP:9673"/>
        <dbReference type="ChEBI" id="CHEBI:30616"/>
        <dbReference type="ChEBI" id="CHEBI:32682"/>
        <dbReference type="ChEBI" id="CHEBI:33019"/>
        <dbReference type="ChEBI" id="CHEBI:78442"/>
        <dbReference type="ChEBI" id="CHEBI:78513"/>
        <dbReference type="ChEBI" id="CHEBI:456215"/>
        <dbReference type="EC" id="6.1.1.19"/>
    </reaction>
</comment>
<comment type="subunit">
    <text evidence="1">Monomer.</text>
</comment>
<comment type="subcellular location">
    <subcellularLocation>
        <location evidence="1">Cytoplasm</location>
    </subcellularLocation>
</comment>
<comment type="similarity">
    <text evidence="1">Belongs to the class-I aminoacyl-tRNA synthetase family.</text>
</comment>
<protein>
    <recommendedName>
        <fullName evidence="1">Arginine--tRNA ligase</fullName>
        <ecNumber evidence="1">6.1.1.19</ecNumber>
    </recommendedName>
    <alternativeName>
        <fullName evidence="1">Arginyl-tRNA synthetase</fullName>
        <shortName evidence="1">ArgRS</shortName>
    </alternativeName>
</protein>
<feature type="chain" id="PRO_1000018013" description="Arginine--tRNA ligase">
    <location>
        <begin position="1"/>
        <end position="561"/>
    </location>
</feature>
<feature type="short sequence motif" description="'HIGH' region">
    <location>
        <begin position="128"/>
        <end position="138"/>
    </location>
</feature>
<proteinExistence type="inferred from homology"/>
<name>SYR_CHRSD</name>
<reference key="1">
    <citation type="journal article" date="2011" name="Stand. Genomic Sci.">
        <title>Complete genome sequence of the halophilic and highly halotolerant Chromohalobacter salexigens type strain (1H11(T)).</title>
        <authorList>
            <person name="Copeland A."/>
            <person name="O'Connor K."/>
            <person name="Lucas S."/>
            <person name="Lapidus A."/>
            <person name="Berry K.W."/>
            <person name="Detter J.C."/>
            <person name="Del Rio T.G."/>
            <person name="Hammon N."/>
            <person name="Dalin E."/>
            <person name="Tice H."/>
            <person name="Pitluck S."/>
            <person name="Bruce D."/>
            <person name="Goodwin L."/>
            <person name="Han C."/>
            <person name="Tapia R."/>
            <person name="Saunders E."/>
            <person name="Schmutz J."/>
            <person name="Brettin T."/>
            <person name="Larimer F."/>
            <person name="Land M."/>
            <person name="Hauser L."/>
            <person name="Vargas C."/>
            <person name="Nieto J.J."/>
            <person name="Kyrpides N.C."/>
            <person name="Ivanova N."/>
            <person name="Goker M."/>
            <person name="Klenk H.P."/>
            <person name="Csonka L.N."/>
            <person name="Woyke T."/>
        </authorList>
    </citation>
    <scope>NUCLEOTIDE SEQUENCE [LARGE SCALE GENOMIC DNA]</scope>
    <source>
        <strain>ATCC BAA-138 / DSM 3043 / CIP 106854 / NCIMB 13768 / 1H11</strain>
    </source>
</reference>
<gene>
    <name evidence="1" type="primary">argS</name>
    <name type="ordered locus">Csal_0602</name>
</gene>
<keyword id="KW-0030">Aminoacyl-tRNA synthetase</keyword>
<keyword id="KW-0067">ATP-binding</keyword>
<keyword id="KW-0963">Cytoplasm</keyword>
<keyword id="KW-0436">Ligase</keyword>
<keyword id="KW-0547">Nucleotide-binding</keyword>
<keyword id="KW-0648">Protein biosynthesis</keyword>
<keyword id="KW-1185">Reference proteome</keyword>
<evidence type="ECO:0000255" key="1">
    <source>
        <dbReference type="HAMAP-Rule" id="MF_00123"/>
    </source>
</evidence>
<organism>
    <name type="scientific">Chromohalobacter salexigens (strain ATCC BAA-138 / DSM 3043 / CIP 106854 / NCIMB 13768 / 1H11)</name>
    <dbReference type="NCBI Taxonomy" id="290398"/>
    <lineage>
        <taxon>Bacteria</taxon>
        <taxon>Pseudomonadati</taxon>
        <taxon>Pseudomonadota</taxon>
        <taxon>Gammaproteobacteria</taxon>
        <taxon>Oceanospirillales</taxon>
        <taxon>Halomonadaceae</taxon>
        <taxon>Chromohalobacter</taxon>
    </lineage>
</organism>
<dbReference type="EC" id="6.1.1.19" evidence="1"/>
<dbReference type="EMBL" id="CP000285">
    <property type="protein sequence ID" value="ABE57964.1"/>
    <property type="molecule type" value="Genomic_DNA"/>
</dbReference>
<dbReference type="RefSeq" id="WP_011505910.1">
    <property type="nucleotide sequence ID" value="NC_007963.1"/>
</dbReference>
<dbReference type="SMR" id="Q1QZZ4"/>
<dbReference type="STRING" id="290398.Csal_0602"/>
<dbReference type="GeneID" id="95333357"/>
<dbReference type="KEGG" id="csa:Csal_0602"/>
<dbReference type="eggNOG" id="COG0018">
    <property type="taxonomic scope" value="Bacteria"/>
</dbReference>
<dbReference type="HOGENOM" id="CLU_006406_0_1_6"/>
<dbReference type="OrthoDB" id="9803211at2"/>
<dbReference type="Proteomes" id="UP000000239">
    <property type="component" value="Chromosome"/>
</dbReference>
<dbReference type="GO" id="GO:0005737">
    <property type="term" value="C:cytoplasm"/>
    <property type="evidence" value="ECO:0007669"/>
    <property type="project" value="UniProtKB-SubCell"/>
</dbReference>
<dbReference type="GO" id="GO:0004814">
    <property type="term" value="F:arginine-tRNA ligase activity"/>
    <property type="evidence" value="ECO:0007669"/>
    <property type="project" value="UniProtKB-UniRule"/>
</dbReference>
<dbReference type="GO" id="GO:0005524">
    <property type="term" value="F:ATP binding"/>
    <property type="evidence" value="ECO:0007669"/>
    <property type="project" value="UniProtKB-UniRule"/>
</dbReference>
<dbReference type="GO" id="GO:0006420">
    <property type="term" value="P:arginyl-tRNA aminoacylation"/>
    <property type="evidence" value="ECO:0007669"/>
    <property type="project" value="UniProtKB-UniRule"/>
</dbReference>
<dbReference type="CDD" id="cd07956">
    <property type="entry name" value="Anticodon_Ia_Arg"/>
    <property type="match status" value="1"/>
</dbReference>
<dbReference type="CDD" id="cd00671">
    <property type="entry name" value="ArgRS_core"/>
    <property type="match status" value="1"/>
</dbReference>
<dbReference type="FunFam" id="1.10.730.10:FF:000008">
    <property type="entry name" value="Arginine--tRNA ligase"/>
    <property type="match status" value="1"/>
</dbReference>
<dbReference type="FunFam" id="3.30.1360.70:FF:000003">
    <property type="entry name" value="Arginine--tRNA ligase"/>
    <property type="match status" value="1"/>
</dbReference>
<dbReference type="FunFam" id="3.40.50.620:FF:000062">
    <property type="entry name" value="Arginine--tRNA ligase"/>
    <property type="match status" value="1"/>
</dbReference>
<dbReference type="Gene3D" id="3.30.1360.70">
    <property type="entry name" value="Arginyl tRNA synthetase N-terminal domain"/>
    <property type="match status" value="1"/>
</dbReference>
<dbReference type="Gene3D" id="3.40.50.620">
    <property type="entry name" value="HUPs"/>
    <property type="match status" value="1"/>
</dbReference>
<dbReference type="Gene3D" id="1.10.730.10">
    <property type="entry name" value="Isoleucyl-tRNA Synthetase, Domain 1"/>
    <property type="match status" value="1"/>
</dbReference>
<dbReference type="HAMAP" id="MF_00123">
    <property type="entry name" value="Arg_tRNA_synth"/>
    <property type="match status" value="1"/>
</dbReference>
<dbReference type="InterPro" id="IPR001412">
    <property type="entry name" value="aa-tRNA-synth_I_CS"/>
</dbReference>
<dbReference type="InterPro" id="IPR001278">
    <property type="entry name" value="Arg-tRNA-ligase"/>
</dbReference>
<dbReference type="InterPro" id="IPR005148">
    <property type="entry name" value="Arg-tRNA-synth_N"/>
</dbReference>
<dbReference type="InterPro" id="IPR036695">
    <property type="entry name" value="Arg-tRNA-synth_N_sf"/>
</dbReference>
<dbReference type="InterPro" id="IPR035684">
    <property type="entry name" value="ArgRS_core"/>
</dbReference>
<dbReference type="InterPro" id="IPR008909">
    <property type="entry name" value="DALR_anticod-bd"/>
</dbReference>
<dbReference type="InterPro" id="IPR014729">
    <property type="entry name" value="Rossmann-like_a/b/a_fold"/>
</dbReference>
<dbReference type="InterPro" id="IPR009080">
    <property type="entry name" value="tRNAsynth_Ia_anticodon-bd"/>
</dbReference>
<dbReference type="NCBIfam" id="TIGR00456">
    <property type="entry name" value="argS"/>
    <property type="match status" value="1"/>
</dbReference>
<dbReference type="PANTHER" id="PTHR11956:SF5">
    <property type="entry name" value="ARGININE--TRNA LIGASE, CYTOPLASMIC"/>
    <property type="match status" value="1"/>
</dbReference>
<dbReference type="PANTHER" id="PTHR11956">
    <property type="entry name" value="ARGINYL-TRNA SYNTHETASE"/>
    <property type="match status" value="1"/>
</dbReference>
<dbReference type="Pfam" id="PF03485">
    <property type="entry name" value="Arg_tRNA_synt_N"/>
    <property type="match status" value="1"/>
</dbReference>
<dbReference type="Pfam" id="PF05746">
    <property type="entry name" value="DALR_1"/>
    <property type="match status" value="1"/>
</dbReference>
<dbReference type="Pfam" id="PF00750">
    <property type="entry name" value="tRNA-synt_1d"/>
    <property type="match status" value="1"/>
</dbReference>
<dbReference type="PRINTS" id="PR01038">
    <property type="entry name" value="TRNASYNTHARG"/>
</dbReference>
<dbReference type="SMART" id="SM01016">
    <property type="entry name" value="Arg_tRNA_synt_N"/>
    <property type="match status" value="1"/>
</dbReference>
<dbReference type="SMART" id="SM00836">
    <property type="entry name" value="DALR_1"/>
    <property type="match status" value="1"/>
</dbReference>
<dbReference type="SUPFAM" id="SSF47323">
    <property type="entry name" value="Anticodon-binding domain of a subclass of class I aminoacyl-tRNA synthetases"/>
    <property type="match status" value="1"/>
</dbReference>
<dbReference type="SUPFAM" id="SSF55190">
    <property type="entry name" value="Arginyl-tRNA synthetase (ArgRS), N-terminal 'additional' domain"/>
    <property type="match status" value="1"/>
</dbReference>
<dbReference type="SUPFAM" id="SSF52374">
    <property type="entry name" value="Nucleotidylyl transferase"/>
    <property type="match status" value="1"/>
</dbReference>
<dbReference type="PROSITE" id="PS00178">
    <property type="entry name" value="AA_TRNA_LIGASE_I"/>
    <property type="match status" value="1"/>
</dbReference>
<sequence length="561" mass="61535">MKETIIELLEAAGTQLKQQGILPADAPLTVKVEPTKDKAHGDYASNLALTLAKPAGRKPRDLAEALVAALPPSDAIRQVDIAGPGFINFFAATDAAAQVVPAILDAGDTFGRSLSGAGEKVQVEFVSANPTGPLHVGHGRGAAIGDCLCRLLEATGFEVTREFYYNDAGAQIQNLALSVQARVQGLTPDDAAWPEDGYRGAYINDVAQAYLAGETVVADDRDVTASAAPDDLDAIRDFAVAYLRREQDLDLKAFGVAFDVYFLESSLYDDGKVDATVKALVEGGHTYEEDGATWLRTTDFGDDKDRVMRKKDGGYTYFLPDVAYHLDKWQRGFTTVINEQGADHHSTVTRVRAGLQALEAGIPQGWPDYVLHQMVLVTRSGVEVKLSKRAGSYVTLRDLIDEVGRDATRFFLAARRSDSQLTFDIDLARSQSNDNPVYYIQYAHARVCSVMRRAQDAGKAFDRDLAMQHLGRLDAPQEKELMNRLARYPEVVERAARMREPQQVAQYLMDLAADFHTCYNAVKVMVEDDELRNARLALGLATRQVIRNGLDLMGVSAPEEM</sequence>